<dbReference type="EMBL" id="AL021889">
    <property type="protein sequence ID" value="CAA17141.1"/>
    <property type="molecule type" value="Genomic_DNA"/>
</dbReference>
<dbReference type="EMBL" id="AL161547">
    <property type="protein sequence ID" value="CAB78800.1"/>
    <property type="molecule type" value="Genomic_DNA"/>
</dbReference>
<dbReference type="EMBL" id="CP002687">
    <property type="protein sequence ID" value="AEE83974.1"/>
    <property type="molecule type" value="Genomic_DNA"/>
</dbReference>
<dbReference type="PIR" id="T05084">
    <property type="entry name" value="T05084"/>
</dbReference>
<dbReference type="RefSeq" id="NP_193532.1">
    <property type="nucleotide sequence ID" value="NM_117908.2"/>
</dbReference>
<dbReference type="SMR" id="O49697"/>
<dbReference type="IntAct" id="O49697">
    <property type="interactions" value="11"/>
</dbReference>
<dbReference type="STRING" id="3702.O49697"/>
<dbReference type="PaxDb" id="3702-AT4G17980.1"/>
<dbReference type="EnsemblPlants" id="AT4G17980.1">
    <property type="protein sequence ID" value="AT4G17980.1"/>
    <property type="gene ID" value="AT4G17980"/>
</dbReference>
<dbReference type="GeneID" id="827523"/>
<dbReference type="Gramene" id="AT4G17980.1">
    <property type="protein sequence ID" value="AT4G17980.1"/>
    <property type="gene ID" value="AT4G17980"/>
</dbReference>
<dbReference type="KEGG" id="ath:AT4G17980"/>
<dbReference type="Araport" id="AT4G17980"/>
<dbReference type="TAIR" id="AT4G17980">
    <property type="gene designation" value="NAC071"/>
</dbReference>
<dbReference type="eggNOG" id="ENOG502QPKD">
    <property type="taxonomic scope" value="Eukaryota"/>
</dbReference>
<dbReference type="HOGENOM" id="CLU_035664_9_1_1"/>
<dbReference type="InParanoid" id="O49697"/>
<dbReference type="OMA" id="ANHQMEI"/>
<dbReference type="OrthoDB" id="1931139at2759"/>
<dbReference type="PhylomeDB" id="O49697"/>
<dbReference type="PRO" id="PR:O49697"/>
<dbReference type="Proteomes" id="UP000006548">
    <property type="component" value="Chromosome 4"/>
</dbReference>
<dbReference type="ExpressionAtlas" id="O49697">
    <property type="expression patterns" value="baseline and differential"/>
</dbReference>
<dbReference type="GO" id="GO:0005634">
    <property type="term" value="C:nucleus"/>
    <property type="evidence" value="ECO:0007669"/>
    <property type="project" value="UniProtKB-SubCell"/>
</dbReference>
<dbReference type="GO" id="GO:0003700">
    <property type="term" value="F:DNA-binding transcription factor activity"/>
    <property type="evidence" value="ECO:0000314"/>
    <property type="project" value="TAIR"/>
</dbReference>
<dbReference type="GO" id="GO:0043565">
    <property type="term" value="F:sequence-specific DNA binding"/>
    <property type="evidence" value="ECO:0000314"/>
    <property type="project" value="TAIR"/>
</dbReference>
<dbReference type="GO" id="GO:0051301">
    <property type="term" value="P:cell division"/>
    <property type="evidence" value="ECO:0000315"/>
    <property type="project" value="TAIR"/>
</dbReference>
<dbReference type="GO" id="GO:0071365">
    <property type="term" value="P:cellular response to auxin stimulus"/>
    <property type="evidence" value="ECO:0000270"/>
    <property type="project" value="TAIR"/>
</dbReference>
<dbReference type="GO" id="GO:0009611">
    <property type="term" value="P:response to wounding"/>
    <property type="evidence" value="ECO:0000270"/>
    <property type="project" value="TAIR"/>
</dbReference>
<dbReference type="FunFam" id="2.170.150.80:FF:000002">
    <property type="entry name" value="Nac domain-containing protein 86"/>
    <property type="match status" value="1"/>
</dbReference>
<dbReference type="Gene3D" id="2.170.150.80">
    <property type="entry name" value="NAC domain"/>
    <property type="match status" value="1"/>
</dbReference>
<dbReference type="InterPro" id="IPR003441">
    <property type="entry name" value="NAC-dom"/>
</dbReference>
<dbReference type="InterPro" id="IPR036093">
    <property type="entry name" value="NAC_dom_sf"/>
</dbReference>
<dbReference type="PANTHER" id="PTHR31744:SF208">
    <property type="entry name" value="(WILD MALAYSIAN BANANA) HYPOTHETICAL PROTEIN"/>
    <property type="match status" value="1"/>
</dbReference>
<dbReference type="PANTHER" id="PTHR31744">
    <property type="entry name" value="PROTEIN CUP-SHAPED COTYLEDON 2-RELATED"/>
    <property type="match status" value="1"/>
</dbReference>
<dbReference type="Pfam" id="PF02365">
    <property type="entry name" value="NAM"/>
    <property type="match status" value="1"/>
</dbReference>
<dbReference type="SUPFAM" id="SSF101941">
    <property type="entry name" value="NAC domain"/>
    <property type="match status" value="1"/>
</dbReference>
<dbReference type="PROSITE" id="PS51005">
    <property type="entry name" value="NAC"/>
    <property type="match status" value="1"/>
</dbReference>
<gene>
    <name evidence="6" type="primary">NAC071</name>
    <name evidence="7" type="ordered locus">At4g17980</name>
</gene>
<sequence>MGSSCLPPGFRFHPTDEELIGYYLSRKIEGLEIELEVIPVIDLYKFDPWELPGKSFLPNRDLEWFFFCPRDKKYANGSRTNRATKAGYWKATGKDRKITCKSSHVIAGYRKTLVFYEGRAPLGDRTNWFMHEYRLCDIDDHSQKSPNFKGAFALCRVVKKNELKKNSKSLKNKNEQDIGSCYSSLATSPCRDEASQIQSFKPSSTTNDSSSIWISPDFILDSSKDYPQIKEVASECFPNYHFPVTTANHHVEFPLQEMLVRS</sequence>
<feature type="chain" id="PRO_0000439704" description="NAC domain-containing protein 71">
    <location>
        <begin position="1"/>
        <end position="262"/>
    </location>
</feature>
<feature type="domain" description="NAC" evidence="1">
    <location>
        <begin position="6"/>
        <end position="160"/>
    </location>
</feature>
<feature type="DNA-binding region" evidence="1">
    <location>
        <begin position="107"/>
        <end position="166"/>
    </location>
</feature>
<keyword id="KW-0238">DNA-binding</keyword>
<keyword id="KW-0539">Nucleus</keyword>
<keyword id="KW-1185">Reference proteome</keyword>
<keyword id="KW-0804">Transcription</keyword>
<keyword id="KW-0805">Transcription regulation</keyword>
<protein>
    <recommendedName>
        <fullName evidence="5">NAC domain-containing protein 71</fullName>
        <shortName evidence="5">ANAC071</shortName>
    </recommendedName>
</protein>
<proteinExistence type="evidence at transcript level"/>
<accession>O49697</accession>
<comment type="function">
    <text evidence="2 3 4">Transcription factor involved in tissue reunion of wounded inflorescence stems. Required for the division of pith cells in the reunion process, which is dependent on polar-transported auxin and the wound-inducible hormones ethylene and jasmonate (PubMed:21911380). Binds to the promoters of XTH19 and XTH20 to induce their expression via auxin signaling. XTH19 and XTH20 are involved in cell proliferation in the tissue reunion process of incised stems (PubMed:25182467). Involved in hypocotyl graft union formation. Required for the auxin- mediated promotion of vascular tissue proliferation during hypocotyl graft attachment (PubMed:27986917).</text>
</comment>
<comment type="subcellular location">
    <subcellularLocation>
        <location evidence="1">Nucleus</location>
    </subcellularLocation>
</comment>
<comment type="induction">
    <text evidence="2">Induced by wounding in the flowering stem.</text>
</comment>
<comment type="domain">
    <text evidence="1">The NAC domain includes a DNA binding domain and a dimerization domain.</text>
</comment>
<organism>
    <name type="scientific">Arabidopsis thaliana</name>
    <name type="common">Mouse-ear cress</name>
    <dbReference type="NCBI Taxonomy" id="3702"/>
    <lineage>
        <taxon>Eukaryota</taxon>
        <taxon>Viridiplantae</taxon>
        <taxon>Streptophyta</taxon>
        <taxon>Embryophyta</taxon>
        <taxon>Tracheophyta</taxon>
        <taxon>Spermatophyta</taxon>
        <taxon>Magnoliopsida</taxon>
        <taxon>eudicotyledons</taxon>
        <taxon>Gunneridae</taxon>
        <taxon>Pentapetalae</taxon>
        <taxon>rosids</taxon>
        <taxon>malvids</taxon>
        <taxon>Brassicales</taxon>
        <taxon>Brassicaceae</taxon>
        <taxon>Camelineae</taxon>
        <taxon>Arabidopsis</taxon>
    </lineage>
</organism>
<evidence type="ECO:0000255" key="1">
    <source>
        <dbReference type="PROSITE-ProRule" id="PRU00353"/>
    </source>
</evidence>
<evidence type="ECO:0000269" key="2">
    <source>
    </source>
</evidence>
<evidence type="ECO:0000269" key="3">
    <source>
    </source>
</evidence>
<evidence type="ECO:0000269" key="4">
    <source>
    </source>
</evidence>
<evidence type="ECO:0000303" key="5">
    <source>
    </source>
</evidence>
<evidence type="ECO:0000305" key="6"/>
<evidence type="ECO:0000312" key="7">
    <source>
        <dbReference type="Araport" id="AT4G17980"/>
    </source>
</evidence>
<reference key="1">
    <citation type="journal article" date="1999" name="Nature">
        <title>Sequence and analysis of chromosome 4 of the plant Arabidopsis thaliana.</title>
        <authorList>
            <person name="Mayer K.F.X."/>
            <person name="Schueller C."/>
            <person name="Wambutt R."/>
            <person name="Murphy G."/>
            <person name="Volckaert G."/>
            <person name="Pohl T."/>
            <person name="Duesterhoeft A."/>
            <person name="Stiekema W."/>
            <person name="Entian K.-D."/>
            <person name="Terryn N."/>
            <person name="Harris B."/>
            <person name="Ansorge W."/>
            <person name="Brandt P."/>
            <person name="Grivell L.A."/>
            <person name="Rieger M."/>
            <person name="Weichselgartner M."/>
            <person name="de Simone V."/>
            <person name="Obermaier B."/>
            <person name="Mache R."/>
            <person name="Mueller M."/>
            <person name="Kreis M."/>
            <person name="Delseny M."/>
            <person name="Puigdomenech P."/>
            <person name="Watson M."/>
            <person name="Schmidtheini T."/>
            <person name="Reichert B."/>
            <person name="Portetelle D."/>
            <person name="Perez-Alonso M."/>
            <person name="Boutry M."/>
            <person name="Bancroft I."/>
            <person name="Vos P."/>
            <person name="Hoheisel J."/>
            <person name="Zimmermann W."/>
            <person name="Wedler H."/>
            <person name="Ridley P."/>
            <person name="Langham S.-A."/>
            <person name="McCullagh B."/>
            <person name="Bilham L."/>
            <person name="Robben J."/>
            <person name="van der Schueren J."/>
            <person name="Grymonprez B."/>
            <person name="Chuang Y.-J."/>
            <person name="Vandenbussche F."/>
            <person name="Braeken M."/>
            <person name="Weltjens I."/>
            <person name="Voet M."/>
            <person name="Bastiaens I."/>
            <person name="Aert R."/>
            <person name="Defoor E."/>
            <person name="Weitzenegger T."/>
            <person name="Bothe G."/>
            <person name="Ramsperger U."/>
            <person name="Hilbert H."/>
            <person name="Braun M."/>
            <person name="Holzer E."/>
            <person name="Brandt A."/>
            <person name="Peters S."/>
            <person name="van Staveren M."/>
            <person name="Dirkse W."/>
            <person name="Mooijman P."/>
            <person name="Klein Lankhorst R."/>
            <person name="Rose M."/>
            <person name="Hauf J."/>
            <person name="Koetter P."/>
            <person name="Berneiser S."/>
            <person name="Hempel S."/>
            <person name="Feldpausch M."/>
            <person name="Lamberth S."/>
            <person name="Van den Daele H."/>
            <person name="De Keyser A."/>
            <person name="Buysshaert C."/>
            <person name="Gielen J."/>
            <person name="Villarroel R."/>
            <person name="De Clercq R."/>
            <person name="van Montagu M."/>
            <person name="Rogers J."/>
            <person name="Cronin A."/>
            <person name="Quail M.A."/>
            <person name="Bray-Allen S."/>
            <person name="Clark L."/>
            <person name="Doggett J."/>
            <person name="Hall S."/>
            <person name="Kay M."/>
            <person name="Lennard N."/>
            <person name="McLay K."/>
            <person name="Mayes R."/>
            <person name="Pettett A."/>
            <person name="Rajandream M.A."/>
            <person name="Lyne M."/>
            <person name="Benes V."/>
            <person name="Rechmann S."/>
            <person name="Borkova D."/>
            <person name="Bloecker H."/>
            <person name="Scharfe M."/>
            <person name="Grimm M."/>
            <person name="Loehnert T.-H."/>
            <person name="Dose S."/>
            <person name="de Haan M."/>
            <person name="Maarse A.C."/>
            <person name="Schaefer M."/>
            <person name="Mueller-Auer S."/>
            <person name="Gabel C."/>
            <person name="Fuchs M."/>
            <person name="Fartmann B."/>
            <person name="Granderath K."/>
            <person name="Dauner D."/>
            <person name="Herzl A."/>
            <person name="Neumann S."/>
            <person name="Argiriou A."/>
            <person name="Vitale D."/>
            <person name="Liguori R."/>
            <person name="Piravandi E."/>
            <person name="Massenet O."/>
            <person name="Quigley F."/>
            <person name="Clabauld G."/>
            <person name="Muendlein A."/>
            <person name="Felber R."/>
            <person name="Schnabl S."/>
            <person name="Hiller R."/>
            <person name="Schmidt W."/>
            <person name="Lecharny A."/>
            <person name="Aubourg S."/>
            <person name="Chefdor F."/>
            <person name="Cooke R."/>
            <person name="Berger C."/>
            <person name="Monfort A."/>
            <person name="Casacuberta E."/>
            <person name="Gibbons T."/>
            <person name="Weber N."/>
            <person name="Vandenbol M."/>
            <person name="Bargues M."/>
            <person name="Terol J."/>
            <person name="Torres A."/>
            <person name="Perez-Perez A."/>
            <person name="Purnelle B."/>
            <person name="Bent E."/>
            <person name="Johnson S."/>
            <person name="Tacon D."/>
            <person name="Jesse T."/>
            <person name="Heijnen L."/>
            <person name="Schwarz S."/>
            <person name="Scholler P."/>
            <person name="Heber S."/>
            <person name="Francs P."/>
            <person name="Bielke C."/>
            <person name="Frishman D."/>
            <person name="Haase D."/>
            <person name="Lemcke K."/>
            <person name="Mewes H.-W."/>
            <person name="Stocker S."/>
            <person name="Zaccaria P."/>
            <person name="Bevan M."/>
            <person name="Wilson R.K."/>
            <person name="de la Bastide M."/>
            <person name="Habermann K."/>
            <person name="Parnell L."/>
            <person name="Dedhia N."/>
            <person name="Gnoj L."/>
            <person name="Schutz K."/>
            <person name="Huang E."/>
            <person name="Spiegel L."/>
            <person name="Sekhon M."/>
            <person name="Murray J."/>
            <person name="Sheet P."/>
            <person name="Cordes M."/>
            <person name="Abu-Threideh J."/>
            <person name="Stoneking T."/>
            <person name="Kalicki J."/>
            <person name="Graves T."/>
            <person name="Harmon G."/>
            <person name="Edwards J."/>
            <person name="Latreille P."/>
            <person name="Courtney L."/>
            <person name="Cloud J."/>
            <person name="Abbott A."/>
            <person name="Scott K."/>
            <person name="Johnson D."/>
            <person name="Minx P."/>
            <person name="Bentley D."/>
            <person name="Fulton B."/>
            <person name="Miller N."/>
            <person name="Greco T."/>
            <person name="Kemp K."/>
            <person name="Kramer J."/>
            <person name="Fulton L."/>
            <person name="Mardis E."/>
            <person name="Dante M."/>
            <person name="Pepin K."/>
            <person name="Hillier L.W."/>
            <person name="Nelson J."/>
            <person name="Spieth J."/>
            <person name="Ryan E."/>
            <person name="Andrews S."/>
            <person name="Geisel C."/>
            <person name="Layman D."/>
            <person name="Du H."/>
            <person name="Ali J."/>
            <person name="Berghoff A."/>
            <person name="Jones K."/>
            <person name="Drone K."/>
            <person name="Cotton M."/>
            <person name="Joshu C."/>
            <person name="Antonoiu B."/>
            <person name="Zidanic M."/>
            <person name="Strong C."/>
            <person name="Sun H."/>
            <person name="Lamar B."/>
            <person name="Yordan C."/>
            <person name="Ma P."/>
            <person name="Zhong J."/>
            <person name="Preston R."/>
            <person name="Vil D."/>
            <person name="Shekher M."/>
            <person name="Matero A."/>
            <person name="Shah R."/>
            <person name="Swaby I.K."/>
            <person name="O'Shaughnessy A."/>
            <person name="Rodriguez M."/>
            <person name="Hoffman J."/>
            <person name="Till S."/>
            <person name="Granat S."/>
            <person name="Shohdy N."/>
            <person name="Hasegawa A."/>
            <person name="Hameed A."/>
            <person name="Lodhi M."/>
            <person name="Johnson A."/>
            <person name="Chen E."/>
            <person name="Marra M.A."/>
            <person name="Martienssen R."/>
            <person name="McCombie W.R."/>
        </authorList>
    </citation>
    <scope>NUCLEOTIDE SEQUENCE [LARGE SCALE GENOMIC DNA]</scope>
    <source>
        <strain>cv. Columbia</strain>
    </source>
</reference>
<reference key="2">
    <citation type="journal article" date="2017" name="Plant J.">
        <title>Araport11: a complete reannotation of the Arabidopsis thaliana reference genome.</title>
        <authorList>
            <person name="Cheng C.Y."/>
            <person name="Krishnakumar V."/>
            <person name="Chan A.P."/>
            <person name="Thibaud-Nissen F."/>
            <person name="Schobel S."/>
            <person name="Town C.D."/>
        </authorList>
    </citation>
    <scope>GENOME REANNOTATION</scope>
    <source>
        <strain>cv. Columbia</strain>
    </source>
</reference>
<reference key="3">
    <citation type="journal article" date="2003" name="DNA Res.">
        <title>Comprehensive analysis of NAC family genes in Oryza sativa and Arabidopsis thaliana.</title>
        <authorList>
            <person name="Ooka H."/>
            <person name="Satoh K."/>
            <person name="Doi K."/>
            <person name="Nagata T."/>
            <person name="Otomo Y."/>
            <person name="Murakami K."/>
            <person name="Matsubara K."/>
            <person name="Osato N."/>
            <person name="Kawai J."/>
            <person name="Carninci P."/>
            <person name="Hayashizaki Y."/>
            <person name="Suzuki K."/>
            <person name="Kojima K."/>
            <person name="Takahara Y."/>
            <person name="Yamamoto K."/>
            <person name="Kikuchi S."/>
        </authorList>
    </citation>
    <scope>GENE FAMILY</scope>
    <scope>NOMENCLATURE</scope>
</reference>
<reference key="4">
    <citation type="journal article" date="2011" name="Proc. Natl. Acad. Sci. U.S.A.">
        <title>Spatially selective hormonal control of RAP2.6L and ANAC071 transcription factors involved in tissue reunion in Arabidopsis.</title>
        <authorList>
            <person name="Asahina M."/>
            <person name="Azuma K."/>
            <person name="Pitaksaringkarn W."/>
            <person name="Yamazaki T."/>
            <person name="Mitsuda N."/>
            <person name="Ohme-Takagi M."/>
            <person name="Yamaguchi S."/>
            <person name="Kamiya Y."/>
            <person name="Okada K."/>
            <person name="Nishimura T."/>
            <person name="Koshiba T."/>
            <person name="Yokota T."/>
            <person name="Kamada H."/>
            <person name="Satoh S."/>
        </authorList>
    </citation>
    <scope>FUNCTION</scope>
    <scope>INDUCTION</scope>
</reference>
<reference key="5">
    <citation type="journal article" date="2014" name="Plant J.">
        <title>XTH20 and XTH19 regulated by ANAC071 under auxin flow are involved in cell proliferation in incised Arabidopsis inflorescence stems.</title>
        <authorList>
            <person name="Pitaksaringkarn W."/>
            <person name="Matsuoka K."/>
            <person name="Asahina M."/>
            <person name="Miura K."/>
            <person name="Sage-Ono K."/>
            <person name="Ono M."/>
            <person name="Yokoyama R."/>
            <person name="Nishitani K."/>
            <person name="Ishii T."/>
            <person name="Iwai H."/>
            <person name="Satoh S."/>
        </authorList>
    </citation>
    <scope>FUNCTION</scope>
</reference>
<reference key="6">
    <citation type="journal article" date="2016" name="Plant Cell Physiol.">
        <title>Differential cellular control by cotyledon-derived phytohormones involved in graft reunion of Arabidopsis hypocotyls.</title>
        <authorList>
            <person name="Matsuoka K."/>
            <person name="Sugawara E."/>
            <person name="Aoki R."/>
            <person name="Takuma K."/>
            <person name="Terao-Morita M."/>
            <person name="Satoh S."/>
            <person name="Asahina M."/>
        </authorList>
    </citation>
    <scope>FUNCTION</scope>
</reference>
<name>NAC71_ARATH</name>